<proteinExistence type="inferred from homology"/>
<organism>
    <name type="scientific">Yersinia pseudotuberculosis serotype IB (strain PB1/+)</name>
    <dbReference type="NCBI Taxonomy" id="502801"/>
    <lineage>
        <taxon>Bacteria</taxon>
        <taxon>Pseudomonadati</taxon>
        <taxon>Pseudomonadota</taxon>
        <taxon>Gammaproteobacteria</taxon>
        <taxon>Enterobacterales</taxon>
        <taxon>Yersiniaceae</taxon>
        <taxon>Yersinia</taxon>
    </lineage>
</organism>
<dbReference type="EMBL" id="CP001048">
    <property type="protein sequence ID" value="ACC91120.1"/>
    <property type="molecule type" value="Genomic_DNA"/>
</dbReference>
<dbReference type="RefSeq" id="WP_002220760.1">
    <property type="nucleotide sequence ID" value="NZ_CP009780.1"/>
</dbReference>
<dbReference type="SMR" id="B2K844"/>
<dbReference type="GeneID" id="57974600"/>
<dbReference type="KEGG" id="ypb:YPTS_4177"/>
<dbReference type="PATRIC" id="fig|502801.10.peg.3648"/>
<dbReference type="GO" id="GO:0005886">
    <property type="term" value="C:plasma membrane"/>
    <property type="evidence" value="ECO:0007669"/>
    <property type="project" value="UniProtKB-SubCell"/>
</dbReference>
<dbReference type="GO" id="GO:0045259">
    <property type="term" value="C:proton-transporting ATP synthase complex"/>
    <property type="evidence" value="ECO:0007669"/>
    <property type="project" value="UniProtKB-KW"/>
</dbReference>
<dbReference type="GO" id="GO:0046933">
    <property type="term" value="F:proton-transporting ATP synthase activity, rotational mechanism"/>
    <property type="evidence" value="ECO:0007669"/>
    <property type="project" value="UniProtKB-UniRule"/>
</dbReference>
<dbReference type="FunFam" id="1.10.520.20:FF:000001">
    <property type="entry name" value="ATP synthase subunit delta"/>
    <property type="match status" value="1"/>
</dbReference>
<dbReference type="Gene3D" id="1.10.520.20">
    <property type="entry name" value="N-terminal domain of the delta subunit of the F1F0-ATP synthase"/>
    <property type="match status" value="1"/>
</dbReference>
<dbReference type="HAMAP" id="MF_01416">
    <property type="entry name" value="ATP_synth_delta_bact"/>
    <property type="match status" value="1"/>
</dbReference>
<dbReference type="InterPro" id="IPR026015">
    <property type="entry name" value="ATP_synth_OSCP/delta_N_sf"/>
</dbReference>
<dbReference type="InterPro" id="IPR020781">
    <property type="entry name" value="ATPase_OSCP/d_CS"/>
</dbReference>
<dbReference type="InterPro" id="IPR000711">
    <property type="entry name" value="ATPase_OSCP/dsu"/>
</dbReference>
<dbReference type="NCBIfam" id="TIGR01145">
    <property type="entry name" value="ATP_synt_delta"/>
    <property type="match status" value="1"/>
</dbReference>
<dbReference type="NCBIfam" id="NF004402">
    <property type="entry name" value="PRK05758.2-2"/>
    <property type="match status" value="1"/>
</dbReference>
<dbReference type="NCBIfam" id="NF004404">
    <property type="entry name" value="PRK05758.2-5"/>
    <property type="match status" value="1"/>
</dbReference>
<dbReference type="PANTHER" id="PTHR11910">
    <property type="entry name" value="ATP SYNTHASE DELTA CHAIN"/>
    <property type="match status" value="1"/>
</dbReference>
<dbReference type="Pfam" id="PF00213">
    <property type="entry name" value="OSCP"/>
    <property type="match status" value="1"/>
</dbReference>
<dbReference type="PRINTS" id="PR00125">
    <property type="entry name" value="ATPASEDELTA"/>
</dbReference>
<dbReference type="SUPFAM" id="SSF47928">
    <property type="entry name" value="N-terminal domain of the delta subunit of the F1F0-ATP synthase"/>
    <property type="match status" value="1"/>
</dbReference>
<dbReference type="PROSITE" id="PS00389">
    <property type="entry name" value="ATPASE_DELTA"/>
    <property type="match status" value="1"/>
</dbReference>
<comment type="function">
    <text evidence="1">F(1)F(0) ATP synthase produces ATP from ADP in the presence of a proton or sodium gradient. F-type ATPases consist of two structural domains, F(1) containing the extramembraneous catalytic core and F(0) containing the membrane proton channel, linked together by a central stalk and a peripheral stalk. During catalysis, ATP synthesis in the catalytic domain of F(1) is coupled via a rotary mechanism of the central stalk subunits to proton translocation.</text>
</comment>
<comment type="function">
    <text evidence="1">This protein is part of the stalk that links CF(0) to CF(1). It either transmits conformational changes from CF(0) to CF(1) or is implicated in proton conduction.</text>
</comment>
<comment type="subunit">
    <text evidence="1">F-type ATPases have 2 components, F(1) - the catalytic core - and F(0) - the membrane proton channel. F(1) has five subunits: alpha(3), beta(3), gamma(1), delta(1), epsilon(1). F(0) has three main subunits: a(1), b(2) and c(10-14). The alpha and beta chains form an alternating ring which encloses part of the gamma chain. F(1) is attached to F(0) by a central stalk formed by the gamma and epsilon chains, while a peripheral stalk is formed by the delta and b chains.</text>
</comment>
<comment type="subcellular location">
    <subcellularLocation>
        <location evidence="1">Cell inner membrane</location>
        <topology evidence="1">Peripheral membrane protein</topology>
    </subcellularLocation>
</comment>
<comment type="similarity">
    <text evidence="1">Belongs to the ATPase delta chain family.</text>
</comment>
<accession>B2K844</accession>
<sequence>MSEFVTVARPYAKAAFDFAVEHQAVERWQNMLAFTAQVTRNEQIAELLSGAVAPETMSTTFIAVCGDQLDEPAQNFIRVMAENGRLLVLPEVLQQFIQLRASLESTVDVEVSSARALNDEQLAKIAAAMEKRLSRKVKLNCKIDKSVMAGVVIRAGDMVIDGSVRGRLERLADVLQS</sequence>
<name>ATPD_YERPB</name>
<gene>
    <name evidence="1" type="primary">atpH</name>
    <name type="ordered locus">YPTS_4177</name>
</gene>
<protein>
    <recommendedName>
        <fullName evidence="1">ATP synthase subunit delta</fullName>
    </recommendedName>
    <alternativeName>
        <fullName evidence="1">ATP synthase F(1) sector subunit delta</fullName>
    </alternativeName>
    <alternativeName>
        <fullName evidence="1">F-type ATPase subunit delta</fullName>
        <shortName evidence="1">F-ATPase subunit delta</shortName>
    </alternativeName>
</protein>
<feature type="chain" id="PRO_0000371206" description="ATP synthase subunit delta">
    <location>
        <begin position="1"/>
        <end position="177"/>
    </location>
</feature>
<keyword id="KW-0066">ATP synthesis</keyword>
<keyword id="KW-0997">Cell inner membrane</keyword>
<keyword id="KW-1003">Cell membrane</keyword>
<keyword id="KW-0139">CF(1)</keyword>
<keyword id="KW-0375">Hydrogen ion transport</keyword>
<keyword id="KW-0406">Ion transport</keyword>
<keyword id="KW-0472">Membrane</keyword>
<keyword id="KW-0813">Transport</keyword>
<evidence type="ECO:0000255" key="1">
    <source>
        <dbReference type="HAMAP-Rule" id="MF_01416"/>
    </source>
</evidence>
<reference key="1">
    <citation type="submission" date="2008-04" db="EMBL/GenBank/DDBJ databases">
        <title>Complete sequence of Yersinia pseudotuberculosis PB1/+.</title>
        <authorList>
            <person name="Copeland A."/>
            <person name="Lucas S."/>
            <person name="Lapidus A."/>
            <person name="Glavina del Rio T."/>
            <person name="Dalin E."/>
            <person name="Tice H."/>
            <person name="Bruce D."/>
            <person name="Goodwin L."/>
            <person name="Pitluck S."/>
            <person name="Munk A.C."/>
            <person name="Brettin T."/>
            <person name="Detter J.C."/>
            <person name="Han C."/>
            <person name="Tapia R."/>
            <person name="Schmutz J."/>
            <person name="Larimer F."/>
            <person name="Land M."/>
            <person name="Hauser L."/>
            <person name="Challacombe J.F."/>
            <person name="Green L."/>
            <person name="Lindler L.E."/>
            <person name="Nikolich M.P."/>
            <person name="Richardson P."/>
        </authorList>
    </citation>
    <scope>NUCLEOTIDE SEQUENCE [LARGE SCALE GENOMIC DNA]</scope>
    <source>
        <strain>PB1/+</strain>
    </source>
</reference>